<dbReference type="EMBL" id="D00663">
    <property type="protein sequence ID" value="BAA00562.1"/>
    <property type="molecule type" value="Genomic_RNA"/>
</dbReference>
<dbReference type="EMBL" id="X63704">
    <property type="protein sequence ID" value="CAA45233.1"/>
    <property type="molecule type" value="Genomic_RNA"/>
</dbReference>
<dbReference type="PIR" id="A31884">
    <property type="entry name" value="SHNZMV"/>
</dbReference>
<dbReference type="SMR" id="P69465"/>
<dbReference type="GO" id="GO:0020002">
    <property type="term" value="C:host cell plasma membrane"/>
    <property type="evidence" value="ECO:0007669"/>
    <property type="project" value="UniProtKB-SubCell"/>
</dbReference>
<dbReference type="GO" id="GO:0016020">
    <property type="term" value="C:membrane"/>
    <property type="evidence" value="ECO:0007669"/>
    <property type="project" value="UniProtKB-KW"/>
</dbReference>
<dbReference type="GO" id="GO:0055036">
    <property type="term" value="C:virion membrane"/>
    <property type="evidence" value="ECO:0007669"/>
    <property type="project" value="UniProtKB-SubCell"/>
</dbReference>
<dbReference type="GO" id="GO:0085034">
    <property type="term" value="P:symbiont-mediated suppression of host NF-kappaB cascade"/>
    <property type="evidence" value="ECO:0007669"/>
    <property type="project" value="UniProtKB-KW"/>
</dbReference>
<dbReference type="InterPro" id="IPR001477">
    <property type="entry name" value="SH"/>
</dbReference>
<dbReference type="Pfam" id="PF01445">
    <property type="entry name" value="SH"/>
    <property type="match status" value="1"/>
</dbReference>
<dbReference type="PIRSF" id="PIRSF003923">
    <property type="entry name" value="SH"/>
    <property type="match status" value="1"/>
</dbReference>
<protein>
    <recommendedName>
        <fullName>Small hydrophobic protein</fullName>
    </recommendedName>
</protein>
<keyword id="KW-1032">Host cell membrane</keyword>
<keyword id="KW-1043">Host membrane</keyword>
<keyword id="KW-0945">Host-virus interaction</keyword>
<keyword id="KW-1100">Inhibition of host NF-kappa-B by virus</keyword>
<keyword id="KW-0472">Membrane</keyword>
<keyword id="KW-0812">Transmembrane</keyword>
<keyword id="KW-1133">Transmembrane helix</keyword>
<keyword id="KW-0946">Virion</keyword>
<feature type="chain" id="PRO_0000142883" description="Small hydrophobic protein">
    <location>
        <begin position="1"/>
        <end position="57"/>
    </location>
</feature>
<feature type="topological domain" description="Virion surface" evidence="3">
    <location>
        <begin position="1"/>
        <end position="8"/>
    </location>
</feature>
<feature type="transmembrane region" description="Helical" evidence="3">
    <location>
        <begin position="9"/>
        <end position="29"/>
    </location>
</feature>
<feature type="topological domain" description="Intravirion" evidence="3">
    <location>
        <begin position="30"/>
        <end position="57"/>
    </location>
</feature>
<sequence>MPANQPPLYLTFLLLILLYLIITLYVWTILTINHKTAVRYAALYQRSCSRWGFDQSL</sequence>
<gene>
    <name type="primary">SH</name>
</gene>
<organismHost>
    <name type="scientific">Homo sapiens</name>
    <name type="common">Human</name>
    <dbReference type="NCBI Taxonomy" id="9606"/>
</organismHost>
<proteinExistence type="inferred from homology"/>
<comment type="function">
    <text evidence="2">Plays a role in the inhibition of the host NF-kappa-B pathway. This inhibition occurs at the receptor level, by preventing the signaling of TNFR1 as well as IL-1R and TLR3.</text>
</comment>
<comment type="subunit">
    <text evidence="1 2">Interacts with host TNFRSF1A, RIPK1 and IRAK1; these interactions interfere with host NF-kappa-B activation at the level of receptor complexes (By similarity). Interacts with host protein UBQLN4 (By similarity).</text>
</comment>
<comment type="subcellular location">
    <subcellularLocation>
        <location evidence="2">Virion membrane</location>
        <topology evidence="2">Single-pass membrane protein</topology>
    </subcellularLocation>
    <subcellularLocation>
        <location evidence="2">Host cell membrane</location>
        <topology evidence="2">Single-pass membrane protein</topology>
    </subcellularLocation>
</comment>
<comment type="similarity">
    <text evidence="4">Belongs to the rubulavirus small hydrophobic protein family.</text>
</comment>
<reference key="1">
    <citation type="journal article" date="1989" name="Virus Res.">
        <title>Nucleotide sequence of the matrix, fusion and putative SH protein genes of mumps virus and their deduced amino acid sequences.</title>
        <authorList>
            <person name="Elliott G.D."/>
            <person name="Afzal M.A."/>
            <person name="Martin S.J."/>
            <person name="Rima B.K."/>
        </authorList>
    </citation>
    <scope>NUCLEOTIDE SEQUENCE [GENOMIC RNA]</scope>
</reference>
<reference key="2">
    <citation type="journal article" date="1993" name="Arch. Virol.">
        <title>Identification of a new mumps virus lineage by nucleotide sequence analysis of the SH gene of ten different strains.</title>
        <authorList>
            <person name="Yeo R.P."/>
            <person name="Afzal M.A."/>
            <person name="Forsey T."/>
            <person name="Rima B.K."/>
        </authorList>
    </citation>
    <scope>NUCLEOTIDE SEQUENCE [GENOMIC RNA]</scope>
</reference>
<accession>P69465</accession>
<accession>P19719</accession>
<organism>
    <name type="scientific">Mumps virus (strain SBL)</name>
    <name type="common">MuV</name>
    <dbReference type="NCBI Taxonomy" id="33729"/>
    <lineage>
        <taxon>Viruses</taxon>
        <taxon>Riboviria</taxon>
        <taxon>Orthornavirae</taxon>
        <taxon>Negarnaviricota</taxon>
        <taxon>Haploviricotina</taxon>
        <taxon>Monjiviricetes</taxon>
        <taxon>Mononegavirales</taxon>
        <taxon>Paramyxoviridae</taxon>
        <taxon>Rubulavirinae</taxon>
        <taxon>Orthorubulavirus</taxon>
        <taxon>Orthorubulavirus parotitidis</taxon>
        <taxon>Mumps orthorubulavirus</taxon>
    </lineage>
</organism>
<name>SH_MUMPS</name>
<evidence type="ECO:0000250" key="1">
    <source>
        <dbReference type="UniProtKB" id="P22110"/>
    </source>
</evidence>
<evidence type="ECO:0000250" key="2">
    <source>
        <dbReference type="UniProtKB" id="P22112"/>
    </source>
</evidence>
<evidence type="ECO:0000255" key="3"/>
<evidence type="ECO:0000305" key="4"/>